<name>RS20_DESAP</name>
<accession>B1I6E6</accession>
<reference key="1">
    <citation type="submission" date="2007-10" db="EMBL/GenBank/DDBJ databases">
        <title>Complete sequence of chromosome of Desulforudis audaxviator MP104C.</title>
        <authorList>
            <person name="Copeland A."/>
            <person name="Lucas S."/>
            <person name="Lapidus A."/>
            <person name="Barry K."/>
            <person name="Glavina del Rio T."/>
            <person name="Dalin E."/>
            <person name="Tice H."/>
            <person name="Bruce D."/>
            <person name="Pitluck S."/>
            <person name="Lowry S.R."/>
            <person name="Larimer F."/>
            <person name="Land M.L."/>
            <person name="Hauser L."/>
            <person name="Kyrpides N."/>
            <person name="Ivanova N.N."/>
            <person name="Richardson P."/>
        </authorList>
    </citation>
    <scope>NUCLEOTIDE SEQUENCE [LARGE SCALE GENOMIC DNA]</scope>
    <source>
        <strain>MP104C</strain>
    </source>
</reference>
<protein>
    <recommendedName>
        <fullName evidence="1">Small ribosomal subunit protein bS20</fullName>
    </recommendedName>
    <alternativeName>
        <fullName evidence="2">30S ribosomal protein S20</fullName>
    </alternativeName>
</protein>
<feature type="chain" id="PRO_1000126433" description="Small ribosomal subunit protein bS20">
    <location>
        <begin position="1"/>
        <end position="88"/>
    </location>
</feature>
<keyword id="KW-1185">Reference proteome</keyword>
<keyword id="KW-0687">Ribonucleoprotein</keyword>
<keyword id="KW-0689">Ribosomal protein</keyword>
<keyword id="KW-0694">RNA-binding</keyword>
<keyword id="KW-0699">rRNA-binding</keyword>
<sequence>MAHSRSAKKRIETIRKRTERNKSAKSALKTAIRRFEEAVQGDDKEQAREKLQKALVSIDKGVSKGILHKNTAARRKSRLTKKFNIITG</sequence>
<dbReference type="EMBL" id="CP000860">
    <property type="protein sequence ID" value="ACA60557.1"/>
    <property type="molecule type" value="Genomic_DNA"/>
</dbReference>
<dbReference type="RefSeq" id="WP_012303132.1">
    <property type="nucleotide sequence ID" value="NC_010424.1"/>
</dbReference>
<dbReference type="SMR" id="B1I6E6"/>
<dbReference type="STRING" id="477974.Daud_2067"/>
<dbReference type="KEGG" id="dau:Daud_2067"/>
<dbReference type="eggNOG" id="COG0268">
    <property type="taxonomic scope" value="Bacteria"/>
</dbReference>
<dbReference type="HOGENOM" id="CLU_160655_0_0_9"/>
<dbReference type="OrthoDB" id="9808392at2"/>
<dbReference type="Proteomes" id="UP000008544">
    <property type="component" value="Chromosome"/>
</dbReference>
<dbReference type="GO" id="GO:0005829">
    <property type="term" value="C:cytosol"/>
    <property type="evidence" value="ECO:0007669"/>
    <property type="project" value="TreeGrafter"/>
</dbReference>
<dbReference type="GO" id="GO:0015935">
    <property type="term" value="C:small ribosomal subunit"/>
    <property type="evidence" value="ECO:0007669"/>
    <property type="project" value="TreeGrafter"/>
</dbReference>
<dbReference type="GO" id="GO:0070181">
    <property type="term" value="F:small ribosomal subunit rRNA binding"/>
    <property type="evidence" value="ECO:0007669"/>
    <property type="project" value="TreeGrafter"/>
</dbReference>
<dbReference type="GO" id="GO:0003735">
    <property type="term" value="F:structural constituent of ribosome"/>
    <property type="evidence" value="ECO:0007669"/>
    <property type="project" value="InterPro"/>
</dbReference>
<dbReference type="GO" id="GO:0006412">
    <property type="term" value="P:translation"/>
    <property type="evidence" value="ECO:0007669"/>
    <property type="project" value="UniProtKB-UniRule"/>
</dbReference>
<dbReference type="FunFam" id="1.20.58.110:FF:000001">
    <property type="entry name" value="30S ribosomal protein S20"/>
    <property type="match status" value="1"/>
</dbReference>
<dbReference type="Gene3D" id="1.20.58.110">
    <property type="entry name" value="Ribosomal protein S20"/>
    <property type="match status" value="1"/>
</dbReference>
<dbReference type="HAMAP" id="MF_00500">
    <property type="entry name" value="Ribosomal_bS20"/>
    <property type="match status" value="1"/>
</dbReference>
<dbReference type="InterPro" id="IPR002583">
    <property type="entry name" value="Ribosomal_bS20"/>
</dbReference>
<dbReference type="InterPro" id="IPR036510">
    <property type="entry name" value="Ribosomal_bS20_sf"/>
</dbReference>
<dbReference type="NCBIfam" id="TIGR00029">
    <property type="entry name" value="S20"/>
    <property type="match status" value="1"/>
</dbReference>
<dbReference type="PANTHER" id="PTHR33398">
    <property type="entry name" value="30S RIBOSOMAL PROTEIN S20"/>
    <property type="match status" value="1"/>
</dbReference>
<dbReference type="PANTHER" id="PTHR33398:SF1">
    <property type="entry name" value="SMALL RIBOSOMAL SUBUNIT PROTEIN BS20C"/>
    <property type="match status" value="1"/>
</dbReference>
<dbReference type="Pfam" id="PF01649">
    <property type="entry name" value="Ribosomal_S20p"/>
    <property type="match status" value="1"/>
</dbReference>
<dbReference type="SUPFAM" id="SSF46992">
    <property type="entry name" value="Ribosomal protein S20"/>
    <property type="match status" value="1"/>
</dbReference>
<gene>
    <name evidence="1" type="primary">rpsT</name>
    <name type="ordered locus">Daud_2067</name>
</gene>
<evidence type="ECO:0000255" key="1">
    <source>
        <dbReference type="HAMAP-Rule" id="MF_00500"/>
    </source>
</evidence>
<evidence type="ECO:0000305" key="2"/>
<organism>
    <name type="scientific">Desulforudis audaxviator (strain MP104C)</name>
    <dbReference type="NCBI Taxonomy" id="477974"/>
    <lineage>
        <taxon>Bacteria</taxon>
        <taxon>Bacillati</taxon>
        <taxon>Bacillota</taxon>
        <taxon>Clostridia</taxon>
        <taxon>Thermoanaerobacterales</taxon>
        <taxon>Candidatus Desulforudaceae</taxon>
        <taxon>Candidatus Desulforudis</taxon>
    </lineage>
</organism>
<proteinExistence type="inferred from homology"/>
<comment type="function">
    <text evidence="1">Binds directly to 16S ribosomal RNA.</text>
</comment>
<comment type="similarity">
    <text evidence="1">Belongs to the bacterial ribosomal protein bS20 family.</text>
</comment>